<organism>
    <name type="scientific">Streptococcus pyogenes serotype M12 (strain MGAS2096)</name>
    <dbReference type="NCBI Taxonomy" id="370553"/>
    <lineage>
        <taxon>Bacteria</taxon>
        <taxon>Bacillati</taxon>
        <taxon>Bacillota</taxon>
        <taxon>Bacilli</taxon>
        <taxon>Lactobacillales</taxon>
        <taxon>Streptococcaceae</taxon>
        <taxon>Streptococcus</taxon>
    </lineage>
</organism>
<sequence>MAQIKITLTKSPIGRKPEQRKTVVALGLGKLNSSVVKEDNAAIRGMVTAISHLVTVEDVK</sequence>
<feature type="chain" id="PRO_0000273869" description="Large ribosomal subunit protein uL30">
    <location>
        <begin position="1"/>
        <end position="60"/>
    </location>
</feature>
<dbReference type="EMBL" id="CP000261">
    <property type="protein sequence ID" value="ABF35117.1"/>
    <property type="molecule type" value="Genomic_DNA"/>
</dbReference>
<dbReference type="SMR" id="Q1JE41"/>
<dbReference type="KEGG" id="spj:MGAS2096_Spy0065"/>
<dbReference type="HOGENOM" id="CLU_131047_2_1_9"/>
<dbReference type="GO" id="GO:0022625">
    <property type="term" value="C:cytosolic large ribosomal subunit"/>
    <property type="evidence" value="ECO:0007669"/>
    <property type="project" value="TreeGrafter"/>
</dbReference>
<dbReference type="GO" id="GO:0003735">
    <property type="term" value="F:structural constituent of ribosome"/>
    <property type="evidence" value="ECO:0007669"/>
    <property type="project" value="InterPro"/>
</dbReference>
<dbReference type="GO" id="GO:0006412">
    <property type="term" value="P:translation"/>
    <property type="evidence" value="ECO:0007669"/>
    <property type="project" value="UniProtKB-UniRule"/>
</dbReference>
<dbReference type="CDD" id="cd01658">
    <property type="entry name" value="Ribosomal_L30"/>
    <property type="match status" value="1"/>
</dbReference>
<dbReference type="FunFam" id="3.30.1390.20:FF:000001">
    <property type="entry name" value="50S ribosomal protein L30"/>
    <property type="match status" value="1"/>
</dbReference>
<dbReference type="Gene3D" id="3.30.1390.20">
    <property type="entry name" value="Ribosomal protein L30, ferredoxin-like fold domain"/>
    <property type="match status" value="1"/>
</dbReference>
<dbReference type="HAMAP" id="MF_01371_B">
    <property type="entry name" value="Ribosomal_uL30_B"/>
    <property type="match status" value="1"/>
</dbReference>
<dbReference type="InterPro" id="IPR036919">
    <property type="entry name" value="Ribo_uL30_ferredoxin-like_sf"/>
</dbReference>
<dbReference type="InterPro" id="IPR005996">
    <property type="entry name" value="Ribosomal_uL30_bac-type"/>
</dbReference>
<dbReference type="InterPro" id="IPR018038">
    <property type="entry name" value="Ribosomal_uL30_CS"/>
</dbReference>
<dbReference type="InterPro" id="IPR016082">
    <property type="entry name" value="Ribosomal_uL30_ferredoxin-like"/>
</dbReference>
<dbReference type="NCBIfam" id="TIGR01308">
    <property type="entry name" value="rpmD_bact"/>
    <property type="match status" value="1"/>
</dbReference>
<dbReference type="PANTHER" id="PTHR15892:SF2">
    <property type="entry name" value="LARGE RIBOSOMAL SUBUNIT PROTEIN UL30M"/>
    <property type="match status" value="1"/>
</dbReference>
<dbReference type="PANTHER" id="PTHR15892">
    <property type="entry name" value="MITOCHONDRIAL RIBOSOMAL PROTEIN L30"/>
    <property type="match status" value="1"/>
</dbReference>
<dbReference type="Pfam" id="PF00327">
    <property type="entry name" value="Ribosomal_L30"/>
    <property type="match status" value="1"/>
</dbReference>
<dbReference type="PIRSF" id="PIRSF002211">
    <property type="entry name" value="Ribosomal_L30_bac-type"/>
    <property type="match status" value="1"/>
</dbReference>
<dbReference type="SUPFAM" id="SSF55129">
    <property type="entry name" value="Ribosomal protein L30p/L7e"/>
    <property type="match status" value="1"/>
</dbReference>
<dbReference type="PROSITE" id="PS00634">
    <property type="entry name" value="RIBOSOMAL_L30"/>
    <property type="match status" value="1"/>
</dbReference>
<accession>Q1JE41</accession>
<proteinExistence type="inferred from homology"/>
<protein>
    <recommendedName>
        <fullName evidence="1">Large ribosomal subunit protein uL30</fullName>
    </recommendedName>
    <alternativeName>
        <fullName evidence="2">50S ribosomal protein L30</fullName>
    </alternativeName>
</protein>
<keyword id="KW-0687">Ribonucleoprotein</keyword>
<keyword id="KW-0689">Ribosomal protein</keyword>
<comment type="subunit">
    <text evidence="1">Part of the 50S ribosomal subunit.</text>
</comment>
<comment type="similarity">
    <text evidence="1">Belongs to the universal ribosomal protein uL30 family.</text>
</comment>
<gene>
    <name evidence="1" type="primary">rpmD</name>
    <name type="ordered locus">MGAS2096_Spy0065</name>
</gene>
<name>RL30_STRPB</name>
<evidence type="ECO:0000255" key="1">
    <source>
        <dbReference type="HAMAP-Rule" id="MF_01371"/>
    </source>
</evidence>
<evidence type="ECO:0000305" key="2"/>
<reference key="1">
    <citation type="journal article" date="2006" name="Proc. Natl. Acad. Sci. U.S.A.">
        <title>Molecular genetic anatomy of inter- and intraserotype variation in the human bacterial pathogen group A Streptococcus.</title>
        <authorList>
            <person name="Beres S.B."/>
            <person name="Richter E.W."/>
            <person name="Nagiec M.J."/>
            <person name="Sumby P."/>
            <person name="Porcella S.F."/>
            <person name="DeLeo F.R."/>
            <person name="Musser J.M."/>
        </authorList>
    </citation>
    <scope>NUCLEOTIDE SEQUENCE [LARGE SCALE GENOMIC DNA]</scope>
    <source>
        <strain>MGAS2096</strain>
    </source>
</reference>